<keyword id="KW-0040">ANK repeat</keyword>
<keyword id="KW-0967">Endosome</keyword>
<keyword id="KW-0472">Membrane</keyword>
<keyword id="KW-0479">Metal-binding</keyword>
<keyword id="KW-0944">Nitration</keyword>
<keyword id="KW-0597">Phosphoprotein</keyword>
<keyword id="KW-1185">Reference proteome</keyword>
<keyword id="KW-0677">Repeat</keyword>
<keyword id="KW-0807">Transducer</keyword>
<keyword id="KW-0862">Zinc</keyword>
<keyword id="KW-0863">Zinc-finger</keyword>
<protein>
    <recommendedName>
        <fullName>Arf-GAP with coiled-coil, ANK repeat and PH domain-containing protein 1</fullName>
    </recommendedName>
    <alternativeName>
        <fullName>Centaurin-beta-1</fullName>
        <shortName>Cnt-b1</shortName>
    </alternativeName>
</protein>
<organism>
    <name type="scientific">Bos taurus</name>
    <name type="common">Bovine</name>
    <dbReference type="NCBI Taxonomy" id="9913"/>
    <lineage>
        <taxon>Eukaryota</taxon>
        <taxon>Metazoa</taxon>
        <taxon>Chordata</taxon>
        <taxon>Craniata</taxon>
        <taxon>Vertebrata</taxon>
        <taxon>Euteleostomi</taxon>
        <taxon>Mammalia</taxon>
        <taxon>Eutheria</taxon>
        <taxon>Laurasiatheria</taxon>
        <taxon>Artiodactyla</taxon>
        <taxon>Ruminantia</taxon>
        <taxon>Pecora</taxon>
        <taxon>Bovidae</taxon>
        <taxon>Bovinae</taxon>
        <taxon>Bos</taxon>
    </lineage>
</organism>
<comment type="function">
    <text evidence="1">GTPase-activating protein (GAP) for ADP ribosylation factor 6 (ARF6) required for clathrin-dependent export of proteins from recycling endosomes to trans-Golgi network and cell surface. Required for regulated export of ITGB1 from recycling endosomes to the cell surface and ITGB1-dependent cell migration (By similarity).</text>
</comment>
<comment type="activity regulation">
    <text evidence="2">GAP activity stimulated by phosphatidylinositol 4,5-bisphosphate (PIP2) and phosphatidic acid.</text>
</comment>
<comment type="subunit">
    <text evidence="2">Banana-shaped homodimer laterally assembling into tetramers, the tetramers further pack helically onto the membrane. Interacts with GTP-bound ARF6. Interacts with third cytoplasmic loop of SLC2A4/GLUT4. Interacts with CLTC. Interacts with GULP1. Forms a complex with GDP-bound ARF6 and GULP1. Interacts with ITGB1; required for ITGB1 recycling (By similarity).</text>
</comment>
<comment type="subcellular location">
    <subcellularLocation>
        <location evidence="1">Recycling endosome membrane</location>
        <topology evidence="1">Peripheral membrane protein</topology>
        <orientation evidence="1">Cytoplasmic side</orientation>
    </subcellularLocation>
</comment>
<comment type="domain">
    <text evidence="2">PH domain binds phospholipids including phosphatidic acid, phosphatidylinositol 3-phosphate, phosphatidylinositol 3,5-bisphosphate (PIP2) and phosphatidylinositol 3,4,5-trisphosphate (PIP3). May mediate ACAP1-binding to PIP2 or PIP3 containing membranes. Only one PH domain of one ACAP1 dimer inserts into the membrane, while the other PH domain acts primaryly to interact with adjacent ACAP1 dimers (By similarity).</text>
</comment>
<comment type="domain">
    <text evidence="2">The BAR domain mediates homodimerization, it can neither bind membrane nor impart curvature, but instead requires the neighboring PH domain to achieve these functions (By similarity).</text>
</comment>
<comment type="PTM">
    <text evidence="2">Phosphorylation at Ser-555 by PKB is required for interaction with ITGB1, export of ITGB1 from recycling endosomes to the cell surface and ITGB1-dependent cell migration.</text>
</comment>
<evidence type="ECO:0000250" key="1"/>
<evidence type="ECO:0000250" key="2">
    <source>
        <dbReference type="UniProtKB" id="Q15027"/>
    </source>
</evidence>
<evidence type="ECO:0000255" key="3"/>
<evidence type="ECO:0000255" key="4">
    <source>
        <dbReference type="PROSITE-ProRule" id="PRU00145"/>
    </source>
</evidence>
<evidence type="ECO:0000255" key="5">
    <source>
        <dbReference type="PROSITE-ProRule" id="PRU00288"/>
    </source>
</evidence>
<evidence type="ECO:0000256" key="6">
    <source>
        <dbReference type="SAM" id="MobiDB-lite"/>
    </source>
</evidence>
<evidence type="ECO:0000312" key="7">
    <source>
        <dbReference type="EMBL" id="AAI42329.1"/>
    </source>
</evidence>
<proteinExistence type="evidence at transcript level"/>
<feature type="chain" id="PRO_0000306383" description="Arf-GAP with coiled-coil, ANK repeat and PH domain-containing protein 1">
    <location>
        <begin position="1"/>
        <end position="745"/>
    </location>
</feature>
<feature type="domain" description="BAR" evidence="3">
    <location>
        <begin position="1"/>
        <end position="226"/>
    </location>
</feature>
<feature type="domain" description="PH" evidence="4">
    <location>
        <begin position="265"/>
        <end position="360"/>
    </location>
</feature>
<feature type="domain" description="Arf-GAP" evidence="5">
    <location>
        <begin position="405"/>
        <end position="527"/>
    </location>
</feature>
<feature type="repeat" description="ANK 1" evidence="3">
    <location>
        <begin position="607"/>
        <end position="640"/>
    </location>
</feature>
<feature type="repeat" description="ANK 2" evidence="3">
    <location>
        <begin position="644"/>
        <end position="673"/>
    </location>
</feature>
<feature type="repeat" description="ANK 3" evidence="3">
    <location>
        <begin position="677"/>
        <end position="707"/>
    </location>
</feature>
<feature type="zinc finger region" description="C4-type" evidence="5">
    <location>
        <begin position="420"/>
        <end position="443"/>
    </location>
</feature>
<feature type="region of interest" description="Required for formation of endosomal tubules when overexpressed with PIP5K1C" evidence="2">
    <location>
        <begin position="1"/>
        <end position="382"/>
    </location>
</feature>
<feature type="region of interest" description="Required for interaction with GULP1" evidence="2">
    <location>
        <begin position="405"/>
        <end position="745"/>
    </location>
</feature>
<feature type="region of interest" description="Disordered" evidence="6">
    <location>
        <begin position="525"/>
        <end position="569"/>
    </location>
</feature>
<feature type="region of interest" description="Prevents interaction with ITGB1 when S-554 is not phosphorylated" evidence="1">
    <location>
        <begin position="525"/>
        <end position="567"/>
    </location>
</feature>
<feature type="compositionally biased region" description="Pro residues" evidence="6">
    <location>
        <begin position="537"/>
        <end position="546"/>
    </location>
</feature>
<feature type="modified residue" description="3'-nitrotyrosine" evidence="2">
    <location>
        <position position="485"/>
    </location>
</feature>
<feature type="modified residue" description="Phosphoserine; by PKB" evidence="2">
    <location>
        <position position="555"/>
    </location>
</feature>
<dbReference type="EMBL" id="BC142328">
    <property type="protein sequence ID" value="AAI42329.1"/>
    <property type="molecule type" value="mRNA"/>
</dbReference>
<dbReference type="RefSeq" id="NP_001096704.1">
    <property type="nucleotide sequence ID" value="NM_001103234.1"/>
</dbReference>
<dbReference type="SMR" id="A5PK26"/>
<dbReference type="FunCoup" id="A5PK26">
    <property type="interactions" value="912"/>
</dbReference>
<dbReference type="STRING" id="9913.ENSBTAP00000070673"/>
<dbReference type="PaxDb" id="9913-ENSBTAP00000034967"/>
<dbReference type="GeneID" id="508582"/>
<dbReference type="KEGG" id="bta:508582"/>
<dbReference type="CTD" id="9744"/>
<dbReference type="eggNOG" id="KOG0521">
    <property type="taxonomic scope" value="Eukaryota"/>
</dbReference>
<dbReference type="InParanoid" id="A5PK26"/>
<dbReference type="OrthoDB" id="10070851at2759"/>
<dbReference type="Proteomes" id="UP000009136">
    <property type="component" value="Unplaced"/>
</dbReference>
<dbReference type="GO" id="GO:0055038">
    <property type="term" value="C:recycling endosome membrane"/>
    <property type="evidence" value="ECO:0007669"/>
    <property type="project" value="UniProtKB-SubCell"/>
</dbReference>
<dbReference type="GO" id="GO:0005096">
    <property type="term" value="F:GTPase activator activity"/>
    <property type="evidence" value="ECO:0007669"/>
    <property type="project" value="InterPro"/>
</dbReference>
<dbReference type="GO" id="GO:0008270">
    <property type="term" value="F:zinc ion binding"/>
    <property type="evidence" value="ECO:0007669"/>
    <property type="project" value="UniProtKB-KW"/>
</dbReference>
<dbReference type="GO" id="GO:0007165">
    <property type="term" value="P:signal transduction"/>
    <property type="evidence" value="ECO:0007669"/>
    <property type="project" value="UniProtKB-KW"/>
</dbReference>
<dbReference type="CDD" id="cd08852">
    <property type="entry name" value="ArfGap_ACAP1"/>
    <property type="match status" value="1"/>
</dbReference>
<dbReference type="CDD" id="cd13250">
    <property type="entry name" value="PH_ACAP"/>
    <property type="match status" value="1"/>
</dbReference>
<dbReference type="FunFam" id="1.20.1270.60:FF:000062">
    <property type="entry name" value="Arf-GAP with coiled-coil, ANK repeat and PH domain-containing protein 1"/>
    <property type="match status" value="1"/>
</dbReference>
<dbReference type="FunFam" id="1.10.220.150:FF:000007">
    <property type="entry name" value="Arf-GAP with coiled-coil, ANK repeat and PH domain-containing protein 2"/>
    <property type="match status" value="1"/>
</dbReference>
<dbReference type="FunFam" id="1.25.40.20:FF:000020">
    <property type="entry name" value="Arf-GAP with coiled-coil, ANK repeat and PH domain-containing protein 2"/>
    <property type="match status" value="1"/>
</dbReference>
<dbReference type="FunFam" id="2.30.29.30:FF:000026">
    <property type="entry name" value="Arf-GAP with coiled-coil, ANK repeat and PH domain-containing protein 2"/>
    <property type="match status" value="1"/>
</dbReference>
<dbReference type="Gene3D" id="1.25.40.20">
    <property type="entry name" value="Ankyrin repeat-containing domain"/>
    <property type="match status" value="1"/>
</dbReference>
<dbReference type="Gene3D" id="1.10.220.150">
    <property type="entry name" value="Arf GTPase activating protein"/>
    <property type="match status" value="1"/>
</dbReference>
<dbReference type="Gene3D" id="1.20.1270.60">
    <property type="entry name" value="Arfaptin homology (AH) domain/BAR domain"/>
    <property type="match status" value="1"/>
</dbReference>
<dbReference type="Gene3D" id="2.30.29.30">
    <property type="entry name" value="Pleckstrin-homology domain (PH domain)/Phosphotyrosine-binding domain (PTB)"/>
    <property type="match status" value="1"/>
</dbReference>
<dbReference type="InterPro" id="IPR045258">
    <property type="entry name" value="ACAP1/2/3-like"/>
</dbReference>
<dbReference type="InterPro" id="IPR027267">
    <property type="entry name" value="AH/BAR_dom_sf"/>
</dbReference>
<dbReference type="InterPro" id="IPR002110">
    <property type="entry name" value="Ankyrin_rpt"/>
</dbReference>
<dbReference type="InterPro" id="IPR036770">
    <property type="entry name" value="Ankyrin_rpt-contain_sf"/>
</dbReference>
<dbReference type="InterPro" id="IPR037278">
    <property type="entry name" value="ARFGAP/RecO"/>
</dbReference>
<dbReference type="InterPro" id="IPR001164">
    <property type="entry name" value="ArfGAP_dom"/>
</dbReference>
<dbReference type="InterPro" id="IPR038508">
    <property type="entry name" value="ArfGAP_dom_sf"/>
</dbReference>
<dbReference type="InterPro" id="IPR004148">
    <property type="entry name" value="BAR_dom"/>
</dbReference>
<dbReference type="InterPro" id="IPR011993">
    <property type="entry name" value="PH-like_dom_sf"/>
</dbReference>
<dbReference type="InterPro" id="IPR001849">
    <property type="entry name" value="PH_domain"/>
</dbReference>
<dbReference type="PANTHER" id="PTHR23180:SF197">
    <property type="entry name" value="ARF-GAP WITH COILED-COIL, ANK REPEAT AND PH DOMAIN-CONTAINING PROTEIN 1"/>
    <property type="match status" value="1"/>
</dbReference>
<dbReference type="PANTHER" id="PTHR23180">
    <property type="entry name" value="CENTAURIN/ARF"/>
    <property type="match status" value="1"/>
</dbReference>
<dbReference type="Pfam" id="PF12796">
    <property type="entry name" value="Ank_2"/>
    <property type="match status" value="1"/>
</dbReference>
<dbReference type="Pfam" id="PF01412">
    <property type="entry name" value="ArfGap"/>
    <property type="match status" value="1"/>
</dbReference>
<dbReference type="Pfam" id="PF16746">
    <property type="entry name" value="BAR_3"/>
    <property type="match status" value="1"/>
</dbReference>
<dbReference type="Pfam" id="PF00169">
    <property type="entry name" value="PH"/>
    <property type="match status" value="1"/>
</dbReference>
<dbReference type="PRINTS" id="PR00405">
    <property type="entry name" value="REVINTRACTNG"/>
</dbReference>
<dbReference type="SMART" id="SM00248">
    <property type="entry name" value="ANK"/>
    <property type="match status" value="3"/>
</dbReference>
<dbReference type="SMART" id="SM00105">
    <property type="entry name" value="ArfGap"/>
    <property type="match status" value="1"/>
</dbReference>
<dbReference type="SMART" id="SM00233">
    <property type="entry name" value="PH"/>
    <property type="match status" value="1"/>
</dbReference>
<dbReference type="SUPFAM" id="SSF48403">
    <property type="entry name" value="Ankyrin repeat"/>
    <property type="match status" value="1"/>
</dbReference>
<dbReference type="SUPFAM" id="SSF57863">
    <property type="entry name" value="ArfGap/RecO-like zinc finger"/>
    <property type="match status" value="1"/>
</dbReference>
<dbReference type="SUPFAM" id="SSF103657">
    <property type="entry name" value="BAR/IMD domain-like"/>
    <property type="match status" value="1"/>
</dbReference>
<dbReference type="SUPFAM" id="SSF50729">
    <property type="entry name" value="PH domain-like"/>
    <property type="match status" value="1"/>
</dbReference>
<dbReference type="PROSITE" id="PS50297">
    <property type="entry name" value="ANK_REP_REGION"/>
    <property type="match status" value="1"/>
</dbReference>
<dbReference type="PROSITE" id="PS50088">
    <property type="entry name" value="ANK_REPEAT"/>
    <property type="match status" value="1"/>
</dbReference>
<dbReference type="PROSITE" id="PS50115">
    <property type="entry name" value="ARFGAP"/>
    <property type="match status" value="1"/>
</dbReference>
<dbReference type="PROSITE" id="PS50003">
    <property type="entry name" value="PH_DOMAIN"/>
    <property type="match status" value="1"/>
</dbReference>
<gene>
    <name type="primary">ACAP1</name>
    <name type="synonym">CENTB1</name>
</gene>
<accession>A5PK26</accession>
<sequence length="745" mass="82129">MTVKLDFEECLKDSPRFRASVELVEAEVSELETRLEKLLKLGNGLLESGRHYLAASRAFIVGICDLAHLGPPEPMMAECLDKFTQSLSHKLDSHAELLDATQHTLQRQIQTLVKEGLRSFREAGRDFWRGAESLEAALTHNAEVPRRRAQEAEEAGAALKVARAGYRGRALDYALQINVIEDKRKFDIMEFVLRLVEAQATHFQQGHEELSQLAQYRKELGGQLHQLVLNSAREKRDMEQRHVLLKQKELGGEEPEPSLKEGPGGLVMEGHLFKRASNAFKTWSRRWFTIQSNQLVYQKRYKDPVTVVVDDLRLCTVKLCPDSERRFCFEVVSPSKSCLLQSDSERLMQLWVSAVQSSIATAFSQARLDDSPRGLGQGSGHLAISSAATLGPGGLTRGREPGGVGHVAAQVQSVDGNAQCCDCREPAPEWASINLGVTLCIQCSGIHRSLGVHFSKVRSLTLDSWEPELVKLMCELGNVVINQIYEARVEAMAVKKPGPSCSRQEKEAWIHAKYVEKKFLTKLPEIRGRRGGRGPPRGHPPVPPKPGLIRPKPGSFRSKPEPPSEDLQSLHPGALLFRAAGHPPSLPTMADALAHGADVNWVNGGQENATPLIQATAAVRVLNSLLACEFLLQNGANVNQVDNQGRGPLHHATILGHTGLACLFLKRGADLGVRDSEGRDPLTIAVETANADIVTLLRLAKMREADAAQGQAGDETYLDIFRDFSLMASDDPEKLSRRSHDLHTL</sequence>
<reference evidence="7" key="1">
    <citation type="submission" date="2007-06" db="EMBL/GenBank/DDBJ databases">
        <authorList>
            <consortium name="NIH - Mammalian Gene Collection (MGC) project"/>
        </authorList>
    </citation>
    <scope>NUCLEOTIDE SEQUENCE [LARGE SCALE MRNA]</scope>
    <source>
        <strain evidence="7">Hereford</strain>
        <tissue evidence="7">Thymus</tissue>
    </source>
</reference>
<name>ACAP1_BOVIN</name>